<comment type="function">
    <text evidence="1">An essential GTPase which binds GTP, GDP and possibly (p)ppGpp with moderate affinity, with high nucleotide exchange rates and a fairly low GTP hydrolysis rate. Plays a role in control of the cell cycle, stress response, ribosome biogenesis and in those bacteria that undergo differentiation, in morphogenesis control.</text>
</comment>
<comment type="cofactor">
    <cofactor evidence="1">
        <name>Mg(2+)</name>
        <dbReference type="ChEBI" id="CHEBI:18420"/>
    </cofactor>
</comment>
<comment type="subunit">
    <text evidence="1">Monomer.</text>
</comment>
<comment type="subcellular location">
    <subcellularLocation>
        <location evidence="1">Cytoplasm</location>
    </subcellularLocation>
</comment>
<comment type="similarity">
    <text evidence="1">Belongs to the TRAFAC class OBG-HflX-like GTPase superfamily. OBG GTPase family.</text>
</comment>
<proteinExistence type="inferred from homology"/>
<organism>
    <name type="scientific">Staphylococcus aureus (strain MW2)</name>
    <dbReference type="NCBI Taxonomy" id="196620"/>
    <lineage>
        <taxon>Bacteria</taxon>
        <taxon>Bacillati</taxon>
        <taxon>Bacillota</taxon>
        <taxon>Bacilli</taxon>
        <taxon>Bacillales</taxon>
        <taxon>Staphylococcaceae</taxon>
        <taxon>Staphylococcus</taxon>
    </lineage>
</organism>
<accession>Q7A0Q3</accession>
<evidence type="ECO:0000255" key="1">
    <source>
        <dbReference type="HAMAP-Rule" id="MF_01454"/>
    </source>
</evidence>
<evidence type="ECO:0000255" key="2">
    <source>
        <dbReference type="PROSITE-ProRule" id="PRU01229"/>
    </source>
</evidence>
<evidence type="ECO:0000255" key="3">
    <source>
        <dbReference type="PROSITE-ProRule" id="PRU01231"/>
    </source>
</evidence>
<evidence type="ECO:0000256" key="4">
    <source>
        <dbReference type="SAM" id="MobiDB-lite"/>
    </source>
</evidence>
<feature type="chain" id="PRO_0000386276" description="GTPase Obg">
    <location>
        <begin position="1"/>
        <end position="430"/>
    </location>
</feature>
<feature type="domain" description="Obg" evidence="3">
    <location>
        <begin position="1"/>
        <end position="158"/>
    </location>
</feature>
<feature type="domain" description="OBG-type G" evidence="1">
    <location>
        <begin position="159"/>
        <end position="329"/>
    </location>
</feature>
<feature type="domain" description="OCT" evidence="2">
    <location>
        <begin position="352"/>
        <end position="430"/>
    </location>
</feature>
<feature type="region of interest" description="Disordered" evidence="4">
    <location>
        <begin position="118"/>
        <end position="145"/>
    </location>
</feature>
<feature type="binding site" evidence="1">
    <location>
        <begin position="165"/>
        <end position="172"/>
    </location>
    <ligand>
        <name>GTP</name>
        <dbReference type="ChEBI" id="CHEBI:37565"/>
    </ligand>
</feature>
<feature type="binding site" evidence="1">
    <location>
        <position position="172"/>
    </location>
    <ligand>
        <name>Mg(2+)</name>
        <dbReference type="ChEBI" id="CHEBI:18420"/>
    </ligand>
</feature>
<feature type="binding site" evidence="1">
    <location>
        <begin position="190"/>
        <end position="194"/>
    </location>
    <ligand>
        <name>GTP</name>
        <dbReference type="ChEBI" id="CHEBI:37565"/>
    </ligand>
</feature>
<feature type="binding site" evidence="1">
    <location>
        <position position="192"/>
    </location>
    <ligand>
        <name>Mg(2+)</name>
        <dbReference type="ChEBI" id="CHEBI:18420"/>
    </ligand>
</feature>
<feature type="binding site" evidence="1">
    <location>
        <begin position="212"/>
        <end position="215"/>
    </location>
    <ligand>
        <name>GTP</name>
        <dbReference type="ChEBI" id="CHEBI:37565"/>
    </ligand>
</feature>
<feature type="binding site" evidence="1">
    <location>
        <begin position="282"/>
        <end position="285"/>
    </location>
    <ligand>
        <name>GTP</name>
        <dbReference type="ChEBI" id="CHEBI:37565"/>
    </ligand>
</feature>
<feature type="binding site" evidence="1">
    <location>
        <begin position="310"/>
        <end position="312"/>
    </location>
    <ligand>
        <name>GTP</name>
        <dbReference type="ChEBI" id="CHEBI:37565"/>
    </ligand>
</feature>
<gene>
    <name evidence="1" type="primary">obg</name>
    <name type="ordered locus">MW1594</name>
</gene>
<dbReference type="EC" id="3.6.5.-" evidence="1"/>
<dbReference type="EMBL" id="BA000033">
    <property type="protein sequence ID" value="BAB95459.1"/>
    <property type="molecule type" value="Genomic_DNA"/>
</dbReference>
<dbReference type="SMR" id="Q7A0Q3"/>
<dbReference type="KEGG" id="sam:MW1594"/>
<dbReference type="HOGENOM" id="CLU_011747_2_1_9"/>
<dbReference type="GO" id="GO:0005737">
    <property type="term" value="C:cytoplasm"/>
    <property type="evidence" value="ECO:0007669"/>
    <property type="project" value="UniProtKB-SubCell"/>
</dbReference>
<dbReference type="GO" id="GO:0005525">
    <property type="term" value="F:GTP binding"/>
    <property type="evidence" value="ECO:0007669"/>
    <property type="project" value="UniProtKB-UniRule"/>
</dbReference>
<dbReference type="GO" id="GO:0003924">
    <property type="term" value="F:GTPase activity"/>
    <property type="evidence" value="ECO:0007669"/>
    <property type="project" value="UniProtKB-UniRule"/>
</dbReference>
<dbReference type="GO" id="GO:0000287">
    <property type="term" value="F:magnesium ion binding"/>
    <property type="evidence" value="ECO:0007669"/>
    <property type="project" value="InterPro"/>
</dbReference>
<dbReference type="GO" id="GO:0042254">
    <property type="term" value="P:ribosome biogenesis"/>
    <property type="evidence" value="ECO:0007669"/>
    <property type="project" value="UniProtKB-UniRule"/>
</dbReference>
<dbReference type="CDD" id="cd01898">
    <property type="entry name" value="Obg"/>
    <property type="match status" value="1"/>
</dbReference>
<dbReference type="FunFam" id="2.70.210.12:FF:000001">
    <property type="entry name" value="GTPase Obg"/>
    <property type="match status" value="1"/>
</dbReference>
<dbReference type="FunFam" id="3.40.50.300:FF:000515">
    <property type="entry name" value="GTPase Obg"/>
    <property type="match status" value="1"/>
</dbReference>
<dbReference type="Gene3D" id="3.30.300.350">
    <property type="entry name" value="GTP-binding protein OBG, C-terminal domain"/>
    <property type="match status" value="1"/>
</dbReference>
<dbReference type="Gene3D" id="2.70.210.12">
    <property type="entry name" value="GTP1/OBG domain"/>
    <property type="match status" value="1"/>
</dbReference>
<dbReference type="Gene3D" id="3.40.50.300">
    <property type="entry name" value="P-loop containing nucleotide triphosphate hydrolases"/>
    <property type="match status" value="1"/>
</dbReference>
<dbReference type="HAMAP" id="MF_01454">
    <property type="entry name" value="GTPase_Obg"/>
    <property type="match status" value="1"/>
</dbReference>
<dbReference type="InterPro" id="IPR031167">
    <property type="entry name" value="G_OBG"/>
</dbReference>
<dbReference type="InterPro" id="IPR006073">
    <property type="entry name" value="GTP-bd"/>
</dbReference>
<dbReference type="InterPro" id="IPR014100">
    <property type="entry name" value="GTP-bd_Obg/CgtA"/>
</dbReference>
<dbReference type="InterPro" id="IPR036346">
    <property type="entry name" value="GTP-bd_prot_GTP1/OBG_C_sf"/>
</dbReference>
<dbReference type="InterPro" id="IPR006074">
    <property type="entry name" value="GTP1-OBG_CS"/>
</dbReference>
<dbReference type="InterPro" id="IPR006169">
    <property type="entry name" value="GTP1_OBG_dom"/>
</dbReference>
<dbReference type="InterPro" id="IPR036726">
    <property type="entry name" value="GTP1_OBG_dom_sf"/>
</dbReference>
<dbReference type="InterPro" id="IPR045086">
    <property type="entry name" value="OBG_GTPase"/>
</dbReference>
<dbReference type="InterPro" id="IPR015349">
    <property type="entry name" value="OCT_dom"/>
</dbReference>
<dbReference type="InterPro" id="IPR027417">
    <property type="entry name" value="P-loop_NTPase"/>
</dbReference>
<dbReference type="NCBIfam" id="TIGR02729">
    <property type="entry name" value="Obg_CgtA"/>
    <property type="match status" value="1"/>
</dbReference>
<dbReference type="NCBIfam" id="TIGR03595">
    <property type="entry name" value="Obg_CgtA_exten"/>
    <property type="match status" value="1"/>
</dbReference>
<dbReference type="NCBIfam" id="NF008954">
    <property type="entry name" value="PRK12296.1"/>
    <property type="match status" value="1"/>
</dbReference>
<dbReference type="NCBIfam" id="NF008955">
    <property type="entry name" value="PRK12297.1"/>
    <property type="match status" value="1"/>
</dbReference>
<dbReference type="NCBIfam" id="NF008956">
    <property type="entry name" value="PRK12299.1"/>
    <property type="match status" value="1"/>
</dbReference>
<dbReference type="PANTHER" id="PTHR11702">
    <property type="entry name" value="DEVELOPMENTALLY REGULATED GTP-BINDING PROTEIN-RELATED"/>
    <property type="match status" value="1"/>
</dbReference>
<dbReference type="PANTHER" id="PTHR11702:SF31">
    <property type="entry name" value="MITOCHONDRIAL RIBOSOME-ASSOCIATED GTPASE 2"/>
    <property type="match status" value="1"/>
</dbReference>
<dbReference type="Pfam" id="PF09269">
    <property type="entry name" value="DUF1967"/>
    <property type="match status" value="1"/>
</dbReference>
<dbReference type="Pfam" id="PF01018">
    <property type="entry name" value="GTP1_OBG"/>
    <property type="match status" value="1"/>
</dbReference>
<dbReference type="Pfam" id="PF01926">
    <property type="entry name" value="MMR_HSR1"/>
    <property type="match status" value="1"/>
</dbReference>
<dbReference type="PIRSF" id="PIRSF002401">
    <property type="entry name" value="GTP_bd_Obg/CgtA"/>
    <property type="match status" value="1"/>
</dbReference>
<dbReference type="PRINTS" id="PR00326">
    <property type="entry name" value="GTP1OBG"/>
</dbReference>
<dbReference type="SUPFAM" id="SSF102741">
    <property type="entry name" value="Obg GTP-binding protein C-terminal domain"/>
    <property type="match status" value="1"/>
</dbReference>
<dbReference type="SUPFAM" id="SSF82051">
    <property type="entry name" value="Obg GTP-binding protein N-terminal domain"/>
    <property type="match status" value="1"/>
</dbReference>
<dbReference type="SUPFAM" id="SSF52540">
    <property type="entry name" value="P-loop containing nucleoside triphosphate hydrolases"/>
    <property type="match status" value="1"/>
</dbReference>
<dbReference type="PROSITE" id="PS51710">
    <property type="entry name" value="G_OBG"/>
    <property type="match status" value="1"/>
</dbReference>
<dbReference type="PROSITE" id="PS00905">
    <property type="entry name" value="GTP1_OBG"/>
    <property type="match status" value="1"/>
</dbReference>
<dbReference type="PROSITE" id="PS51883">
    <property type="entry name" value="OBG"/>
    <property type="match status" value="1"/>
</dbReference>
<dbReference type="PROSITE" id="PS51881">
    <property type="entry name" value="OCT"/>
    <property type="match status" value="1"/>
</dbReference>
<name>OBG_STAAW</name>
<protein>
    <recommendedName>
        <fullName evidence="1">GTPase Obg</fullName>
        <ecNumber evidence="1">3.6.5.-</ecNumber>
    </recommendedName>
    <alternativeName>
        <fullName evidence="1">GTP-binding protein Obg</fullName>
    </alternativeName>
</protein>
<sequence>MFVDQVKISLKAGDGGNGITAYRREKYVPFGGPAGGDGGKGASVVFEVDEGLRTLLDFRYQRHFKASKGENGQSSNMHGKNAEDLVLKVPPGTIIKNVETDEVLADLVEDGQRAVVAKGGRGGRGNSRFATPRNPAPDFSEKGEPGEELDVSLELKLLADVGLVGFPSVGKSTLLSIVSKAKPKIGAYHFTTIKPNLGVVSTPDQRSFVMADLPGLIEGASDGVGLGHQFLRHVERTKVIVHMIDMSGSEGREPIEDYKVINQELAAYEQRLEDRPQIVVANKMDLPESQDNLNLFKEEIGEDVPVIPVSTITRDNIDQLLYAIADKLEEYKDVDFTVEEEESVGINRVLYKHTPSQDKFTISRDDDGAYVVSGNAIERMFKMTDFNSDPAVRRFARQMRSMGIDDALRERGCKNGDIVRILGGEFEFVE</sequence>
<keyword id="KW-0963">Cytoplasm</keyword>
<keyword id="KW-0342">GTP-binding</keyword>
<keyword id="KW-0378">Hydrolase</keyword>
<keyword id="KW-0460">Magnesium</keyword>
<keyword id="KW-0479">Metal-binding</keyword>
<keyword id="KW-0547">Nucleotide-binding</keyword>
<reference key="1">
    <citation type="journal article" date="2002" name="Lancet">
        <title>Genome and virulence determinants of high virulence community-acquired MRSA.</title>
        <authorList>
            <person name="Baba T."/>
            <person name="Takeuchi F."/>
            <person name="Kuroda M."/>
            <person name="Yuzawa H."/>
            <person name="Aoki K."/>
            <person name="Oguchi A."/>
            <person name="Nagai Y."/>
            <person name="Iwama N."/>
            <person name="Asano K."/>
            <person name="Naimi T."/>
            <person name="Kuroda H."/>
            <person name="Cui L."/>
            <person name="Yamamoto K."/>
            <person name="Hiramatsu K."/>
        </authorList>
    </citation>
    <scope>NUCLEOTIDE SEQUENCE [LARGE SCALE GENOMIC DNA]</scope>
    <source>
        <strain>MW2</strain>
    </source>
</reference>